<dbReference type="EMBL" id="AB001488">
    <property type="protein sequence ID" value="BAA19284.1"/>
    <property type="molecule type" value="Genomic_DNA"/>
</dbReference>
<dbReference type="EMBL" id="AL009126">
    <property type="protein sequence ID" value="CAB12254.1"/>
    <property type="molecule type" value="Genomic_DNA"/>
</dbReference>
<dbReference type="PIR" id="C69771">
    <property type="entry name" value="C69771"/>
</dbReference>
<dbReference type="RefSeq" id="NP_388328.1">
    <property type="nucleotide sequence ID" value="NC_000964.3"/>
</dbReference>
<dbReference type="RefSeq" id="WP_003246626.1">
    <property type="nucleotide sequence ID" value="NZ_OZ025638.1"/>
</dbReference>
<dbReference type="SMR" id="P96603"/>
<dbReference type="FunCoup" id="P96603">
    <property type="interactions" value="178"/>
</dbReference>
<dbReference type="STRING" id="224308.BSU04470"/>
<dbReference type="TCDB" id="2.A.23.1.6">
    <property type="family name" value="the dicarboxylate/amino acid:cation (na(+) or h(+)) symporter (daacs) family"/>
</dbReference>
<dbReference type="PaxDb" id="224308-BSU04470"/>
<dbReference type="EnsemblBacteria" id="CAB12254">
    <property type="protein sequence ID" value="CAB12254"/>
    <property type="gene ID" value="BSU_04470"/>
</dbReference>
<dbReference type="GeneID" id="938223"/>
<dbReference type="KEGG" id="bsu:BSU04470"/>
<dbReference type="PATRIC" id="fig|224308.179.peg.473"/>
<dbReference type="eggNOG" id="COG1301">
    <property type="taxonomic scope" value="Bacteria"/>
</dbReference>
<dbReference type="InParanoid" id="P96603"/>
<dbReference type="OrthoDB" id="9768885at2"/>
<dbReference type="PhylomeDB" id="P96603"/>
<dbReference type="BioCyc" id="BSUB:BSU04470-MONOMER"/>
<dbReference type="Proteomes" id="UP000001570">
    <property type="component" value="Chromosome"/>
</dbReference>
<dbReference type="GO" id="GO:0005886">
    <property type="term" value="C:plasma membrane"/>
    <property type="evidence" value="ECO:0000318"/>
    <property type="project" value="GO_Central"/>
</dbReference>
<dbReference type="GO" id="GO:0015138">
    <property type="term" value="F:fumarate transmembrane transporter activity"/>
    <property type="evidence" value="ECO:0000318"/>
    <property type="project" value="GO_Central"/>
</dbReference>
<dbReference type="GO" id="GO:0015366">
    <property type="term" value="F:malate:proton symporter activity"/>
    <property type="evidence" value="ECO:0000318"/>
    <property type="project" value="GO_Central"/>
</dbReference>
<dbReference type="GO" id="GO:0015141">
    <property type="term" value="F:succinate transmembrane transporter activity"/>
    <property type="evidence" value="ECO:0000318"/>
    <property type="project" value="GO_Central"/>
</dbReference>
<dbReference type="GO" id="GO:0070778">
    <property type="term" value="P:L-aspartate transmembrane transport"/>
    <property type="evidence" value="ECO:0000318"/>
    <property type="project" value="GO_Central"/>
</dbReference>
<dbReference type="FunFam" id="1.10.3860.10:FF:000001">
    <property type="entry name" value="C4-dicarboxylate transport protein"/>
    <property type="match status" value="1"/>
</dbReference>
<dbReference type="Gene3D" id="1.10.3860.10">
    <property type="entry name" value="Sodium:dicarboxylate symporter"/>
    <property type="match status" value="1"/>
</dbReference>
<dbReference type="HAMAP" id="MF_01300">
    <property type="entry name" value="C4_dicarb_transport"/>
    <property type="match status" value="1"/>
</dbReference>
<dbReference type="InterPro" id="IPR023954">
    <property type="entry name" value="C4_dicarb_transport"/>
</dbReference>
<dbReference type="InterPro" id="IPR001991">
    <property type="entry name" value="Na-dicarboxylate_symporter"/>
</dbReference>
<dbReference type="InterPro" id="IPR018107">
    <property type="entry name" value="Na-dicarboxylate_symporter_CS"/>
</dbReference>
<dbReference type="InterPro" id="IPR036458">
    <property type="entry name" value="Na:dicarbo_symporter_sf"/>
</dbReference>
<dbReference type="NCBIfam" id="NF002461">
    <property type="entry name" value="PRK01663.1"/>
    <property type="match status" value="1"/>
</dbReference>
<dbReference type="PANTHER" id="PTHR42865:SF1">
    <property type="entry name" value="AEROBIC C4-DICARBOXYLATE TRANSPORT PROTEIN"/>
    <property type="match status" value="1"/>
</dbReference>
<dbReference type="PANTHER" id="PTHR42865">
    <property type="entry name" value="PROTON/GLUTAMATE-ASPARTATE SYMPORTER"/>
    <property type="match status" value="1"/>
</dbReference>
<dbReference type="Pfam" id="PF00375">
    <property type="entry name" value="SDF"/>
    <property type="match status" value="1"/>
</dbReference>
<dbReference type="PRINTS" id="PR00173">
    <property type="entry name" value="EDTRNSPORT"/>
</dbReference>
<dbReference type="SUPFAM" id="SSF118215">
    <property type="entry name" value="Proton glutamate symport protein"/>
    <property type="match status" value="1"/>
</dbReference>
<dbReference type="PROSITE" id="PS00713">
    <property type="entry name" value="NA_DICARBOXYL_SYMP_1"/>
    <property type="match status" value="1"/>
</dbReference>
<dbReference type="PROSITE" id="PS00714">
    <property type="entry name" value="NA_DICARBOXYL_SYMP_2"/>
    <property type="match status" value="1"/>
</dbReference>
<comment type="function">
    <text evidence="3">Responsible for the transport of succinate and fumarate, but not malate, across the membrane.</text>
</comment>
<comment type="subcellular location">
    <subcellularLocation>
        <location evidence="2">Cell membrane</location>
        <topology evidence="2">Multi-pass membrane protein</topology>
    </subcellularLocation>
</comment>
<comment type="induction">
    <text>Induced by succinate and fumarate. Expression of dctA requires the DctB, DctS and DctR proteins and is decreased in the presence of malate.</text>
</comment>
<comment type="similarity">
    <text evidence="2">Belongs to the dicarboxylate/amino acid:cation symporter (DAACS) (TC 2.A.23) family.</text>
</comment>
<accession>P96603</accession>
<keyword id="KW-1003">Cell membrane</keyword>
<keyword id="KW-0472">Membrane</keyword>
<keyword id="KW-1185">Reference proteome</keyword>
<keyword id="KW-0769">Symport</keyword>
<keyword id="KW-0812">Transmembrane</keyword>
<keyword id="KW-1133">Transmembrane helix</keyword>
<keyword id="KW-0813">Transport</keyword>
<protein>
    <recommendedName>
        <fullName>C4-dicarboxylate transport protein</fullName>
    </recommendedName>
    <alternativeName>
        <fullName>C4-dicarboxylate permease</fullName>
    </alternativeName>
</protein>
<organism>
    <name type="scientific">Bacillus subtilis (strain 168)</name>
    <dbReference type="NCBI Taxonomy" id="224308"/>
    <lineage>
        <taxon>Bacteria</taxon>
        <taxon>Bacillati</taxon>
        <taxon>Bacillota</taxon>
        <taxon>Bacilli</taxon>
        <taxon>Bacillales</taxon>
        <taxon>Bacillaceae</taxon>
        <taxon>Bacillus</taxon>
    </lineage>
</organism>
<reference key="1">
    <citation type="submission" date="1997-03" db="EMBL/GenBank/DDBJ databases">
        <title>A 148 kbp sequence of the region between 35 and 47 degree of the Bacillus subtilis genome.</title>
        <authorList>
            <person name="Kasahara Y."/>
            <person name="Nakai S."/>
            <person name="Lee S."/>
            <person name="Sadaie Y."/>
            <person name="Ogasawara N."/>
        </authorList>
    </citation>
    <scope>NUCLEOTIDE SEQUENCE [GENOMIC DNA]</scope>
    <source>
        <strain>168</strain>
    </source>
</reference>
<reference key="2">
    <citation type="journal article" date="1997" name="Nature">
        <title>The complete genome sequence of the Gram-positive bacterium Bacillus subtilis.</title>
        <authorList>
            <person name="Kunst F."/>
            <person name="Ogasawara N."/>
            <person name="Moszer I."/>
            <person name="Albertini A.M."/>
            <person name="Alloni G."/>
            <person name="Azevedo V."/>
            <person name="Bertero M.G."/>
            <person name="Bessieres P."/>
            <person name="Bolotin A."/>
            <person name="Borchert S."/>
            <person name="Borriss R."/>
            <person name="Boursier L."/>
            <person name="Brans A."/>
            <person name="Braun M."/>
            <person name="Brignell S.C."/>
            <person name="Bron S."/>
            <person name="Brouillet S."/>
            <person name="Bruschi C.V."/>
            <person name="Caldwell B."/>
            <person name="Capuano V."/>
            <person name="Carter N.M."/>
            <person name="Choi S.-K."/>
            <person name="Codani J.-J."/>
            <person name="Connerton I.F."/>
            <person name="Cummings N.J."/>
            <person name="Daniel R.A."/>
            <person name="Denizot F."/>
            <person name="Devine K.M."/>
            <person name="Duesterhoeft A."/>
            <person name="Ehrlich S.D."/>
            <person name="Emmerson P.T."/>
            <person name="Entian K.-D."/>
            <person name="Errington J."/>
            <person name="Fabret C."/>
            <person name="Ferrari E."/>
            <person name="Foulger D."/>
            <person name="Fritz C."/>
            <person name="Fujita M."/>
            <person name="Fujita Y."/>
            <person name="Fuma S."/>
            <person name="Galizzi A."/>
            <person name="Galleron N."/>
            <person name="Ghim S.-Y."/>
            <person name="Glaser P."/>
            <person name="Goffeau A."/>
            <person name="Golightly E.J."/>
            <person name="Grandi G."/>
            <person name="Guiseppi G."/>
            <person name="Guy B.J."/>
            <person name="Haga K."/>
            <person name="Haiech J."/>
            <person name="Harwood C.R."/>
            <person name="Henaut A."/>
            <person name="Hilbert H."/>
            <person name="Holsappel S."/>
            <person name="Hosono S."/>
            <person name="Hullo M.-F."/>
            <person name="Itaya M."/>
            <person name="Jones L.-M."/>
            <person name="Joris B."/>
            <person name="Karamata D."/>
            <person name="Kasahara Y."/>
            <person name="Klaerr-Blanchard M."/>
            <person name="Klein C."/>
            <person name="Kobayashi Y."/>
            <person name="Koetter P."/>
            <person name="Koningstein G."/>
            <person name="Krogh S."/>
            <person name="Kumano M."/>
            <person name="Kurita K."/>
            <person name="Lapidus A."/>
            <person name="Lardinois S."/>
            <person name="Lauber J."/>
            <person name="Lazarevic V."/>
            <person name="Lee S.-M."/>
            <person name="Levine A."/>
            <person name="Liu H."/>
            <person name="Masuda S."/>
            <person name="Mauel C."/>
            <person name="Medigue C."/>
            <person name="Medina N."/>
            <person name="Mellado R.P."/>
            <person name="Mizuno M."/>
            <person name="Moestl D."/>
            <person name="Nakai S."/>
            <person name="Noback M."/>
            <person name="Noone D."/>
            <person name="O'Reilly M."/>
            <person name="Ogawa K."/>
            <person name="Ogiwara A."/>
            <person name="Oudega B."/>
            <person name="Park S.-H."/>
            <person name="Parro V."/>
            <person name="Pohl T.M."/>
            <person name="Portetelle D."/>
            <person name="Porwollik S."/>
            <person name="Prescott A.M."/>
            <person name="Presecan E."/>
            <person name="Pujic P."/>
            <person name="Purnelle B."/>
            <person name="Rapoport G."/>
            <person name="Rey M."/>
            <person name="Reynolds S."/>
            <person name="Rieger M."/>
            <person name="Rivolta C."/>
            <person name="Rocha E."/>
            <person name="Roche B."/>
            <person name="Rose M."/>
            <person name="Sadaie Y."/>
            <person name="Sato T."/>
            <person name="Scanlan E."/>
            <person name="Schleich S."/>
            <person name="Schroeter R."/>
            <person name="Scoffone F."/>
            <person name="Sekiguchi J."/>
            <person name="Sekowska A."/>
            <person name="Seror S.J."/>
            <person name="Serror P."/>
            <person name="Shin B.-S."/>
            <person name="Soldo B."/>
            <person name="Sorokin A."/>
            <person name="Tacconi E."/>
            <person name="Takagi T."/>
            <person name="Takahashi H."/>
            <person name="Takemaru K."/>
            <person name="Takeuchi M."/>
            <person name="Tamakoshi A."/>
            <person name="Tanaka T."/>
            <person name="Terpstra P."/>
            <person name="Tognoni A."/>
            <person name="Tosato V."/>
            <person name="Uchiyama S."/>
            <person name="Vandenbol M."/>
            <person name="Vannier F."/>
            <person name="Vassarotti A."/>
            <person name="Viari A."/>
            <person name="Wambutt R."/>
            <person name="Wedler E."/>
            <person name="Wedler H."/>
            <person name="Weitzenegger T."/>
            <person name="Winters P."/>
            <person name="Wipat A."/>
            <person name="Yamamoto H."/>
            <person name="Yamane K."/>
            <person name="Yasumoto K."/>
            <person name="Yata K."/>
            <person name="Yoshida K."/>
            <person name="Yoshikawa H.-F."/>
            <person name="Zumstein E."/>
            <person name="Yoshikawa H."/>
            <person name="Danchin A."/>
        </authorList>
    </citation>
    <scope>NUCLEOTIDE SEQUENCE [LARGE SCALE GENOMIC DNA]</scope>
    <source>
        <strain>168</strain>
    </source>
</reference>
<reference key="3">
    <citation type="journal article" date="2000" name="Microbiology">
        <title>Regulation of the transport system for C4-dicarboxylic acids in Bacillus subtilis.</title>
        <authorList>
            <person name="Asai K."/>
            <person name="Baik S.-H."/>
            <person name="Kasahara Y."/>
            <person name="Moriya S."/>
            <person name="Ogasawara N."/>
        </authorList>
    </citation>
    <scope>FUNCTION</scope>
    <scope>GENE NAME</scope>
    <source>
        <strain>168</strain>
    </source>
</reference>
<gene>
    <name type="primary">dctA</name>
    <name type="synonym">dctP</name>
    <name type="synonym">ydbH</name>
    <name type="ordered locus">BSU04470</name>
</gene>
<proteinExistence type="evidence at transcript level"/>
<feature type="chain" id="PRO_0000202090" description="C4-dicarboxylate transport protein">
    <location>
        <begin position="1"/>
        <end position="421"/>
    </location>
</feature>
<feature type="transmembrane region" description="Helical" evidence="1">
    <location>
        <begin position="9"/>
        <end position="29"/>
    </location>
</feature>
<feature type="transmembrane region" description="Helical" evidence="1">
    <location>
        <begin position="39"/>
        <end position="59"/>
    </location>
</feature>
<feature type="transmembrane region" description="Helical" evidence="1">
    <location>
        <begin position="76"/>
        <end position="96"/>
    </location>
</feature>
<feature type="transmembrane region" description="Helical" evidence="1">
    <location>
        <begin position="145"/>
        <end position="165"/>
    </location>
</feature>
<feature type="transmembrane region" description="Helical" evidence="1">
    <location>
        <begin position="185"/>
        <end position="205"/>
    </location>
</feature>
<feature type="transmembrane region" description="Helical" evidence="1">
    <location>
        <begin position="219"/>
        <end position="239"/>
    </location>
</feature>
<feature type="transmembrane region" description="Helical" evidence="1">
    <location>
        <begin position="316"/>
        <end position="336"/>
    </location>
</feature>
<feature type="transmembrane region" description="Helical" evidence="1">
    <location>
        <begin position="348"/>
        <end position="368"/>
    </location>
</feature>
<evidence type="ECO:0000255" key="1"/>
<evidence type="ECO:0000305" key="2"/>
<evidence type="ECO:0000305" key="3">
    <source>
    </source>
</evidence>
<sequence>MKLFKNLTVQVITAVIIGVIVGLVWPDVGKEMKPLGDTFINAVKMVIAPIIFFTIVLGIAKMGDMKKVGKVGGKAFIYFEVVTTLALIIGLFVVNIMKPGAGLDYSKLEKGDVSQYTQNGGQGIDWIEFITHIVPSNMVDAFAKGDILQVLFFSILFGVGLAALGEKGKSVIDFFDKVSHVFFKIIGYIMRAAPIGAFGAMAYTIGHFGLDSIKPLASLMMSVYITMFLFVFVALNIICKLYGFSLWNYLRFIKDELLIVLGTSSSESVLPRMMDKMERYGCSKSVVGLVIPTGYSFNLDGTSIYLSMATVFLAQVFGVDLSIGQQITIILVLMLTSKGAAGVTGSGFIVLASTLSALQVIPLEGLALLLGVDRFMSEGRAIVNLIGNGIATIIVAKSENEFDEAKSIEAVEGMKKMKTAV</sequence>
<name>DCTA_BACSU</name>